<accession>Q9Y048</accession>
<accession>Q9TZI6</accession>
<accession>W6RR09</accession>
<name>DTN1_CAEEL</name>
<dbReference type="EMBL" id="AJ131742">
    <property type="protein sequence ID" value="CAA10498.1"/>
    <property type="molecule type" value="mRNA"/>
</dbReference>
<dbReference type="EMBL" id="FO081322">
    <property type="protein sequence ID" value="CCD70779.1"/>
    <property type="molecule type" value="Genomic_DNA"/>
</dbReference>
<dbReference type="EMBL" id="BX284601">
    <property type="protein sequence ID" value="CDM63535.1"/>
    <property type="molecule type" value="Genomic_DNA"/>
</dbReference>
<dbReference type="RefSeq" id="NP_001293429.1">
    <property type="nucleotide sequence ID" value="NM_001306500.1"/>
</dbReference>
<dbReference type="RefSeq" id="NP_001420389.1">
    <molecule id="Q9Y048-2"/>
    <property type="nucleotide sequence ID" value="NM_001433452.1"/>
</dbReference>
<dbReference type="RefSeq" id="NP_490860.1">
    <molecule id="Q9Y048-1"/>
    <property type="nucleotide sequence ID" value="NM_058459.7"/>
</dbReference>
<dbReference type="SMR" id="Q9Y048"/>
<dbReference type="BioGRID" id="37210">
    <property type="interactions" value="39"/>
</dbReference>
<dbReference type="DIP" id="DIP-25663N"/>
<dbReference type="FunCoup" id="Q9Y048">
    <property type="interactions" value="1942"/>
</dbReference>
<dbReference type="IntAct" id="Q9Y048">
    <property type="interactions" value="26"/>
</dbReference>
<dbReference type="STRING" id="6239.F47G6.1a.1"/>
<dbReference type="iPTMnet" id="Q9Y048"/>
<dbReference type="PaxDb" id="6239-F47G6.1"/>
<dbReference type="PeptideAtlas" id="Q9Y048"/>
<dbReference type="EnsemblMetazoa" id="F47G6.1a.1">
    <molecule id="Q9Y048-1"/>
    <property type="protein sequence ID" value="F47G6.1a.1"/>
    <property type="gene ID" value="WBGene00001115"/>
</dbReference>
<dbReference type="EnsemblMetazoa" id="F47G6.1b.1">
    <molecule id="Q9Y048-2"/>
    <property type="protein sequence ID" value="F47G6.1b.1"/>
    <property type="gene ID" value="WBGene00001115"/>
</dbReference>
<dbReference type="GeneID" id="171715"/>
<dbReference type="KEGG" id="cel:CELE_F47G6.1"/>
<dbReference type="UCSC" id="F47G6.1">
    <molecule id="Q9Y048-1"/>
    <property type="organism name" value="c. elegans"/>
</dbReference>
<dbReference type="AGR" id="WB:WBGene00001115"/>
<dbReference type="CTD" id="171715"/>
<dbReference type="WormBase" id="F47G6.1a">
    <property type="protein sequence ID" value="CE26812"/>
    <property type="gene ID" value="WBGene00001115"/>
    <property type="gene designation" value="dyb-1"/>
</dbReference>
<dbReference type="WormBase" id="F47G6.1b">
    <property type="protein sequence ID" value="CE49501"/>
    <property type="gene ID" value="WBGene00001115"/>
    <property type="gene designation" value="dyb-1"/>
</dbReference>
<dbReference type="eggNOG" id="KOG4301">
    <property type="taxonomic scope" value="Eukaryota"/>
</dbReference>
<dbReference type="HOGENOM" id="CLU_011676_1_0_1"/>
<dbReference type="InParanoid" id="Q9Y048"/>
<dbReference type="OMA" id="MFLDIMA"/>
<dbReference type="OrthoDB" id="6019271at2759"/>
<dbReference type="PhylomeDB" id="Q9Y048"/>
<dbReference type="Reactome" id="R-CEL-9913351">
    <property type="pathway name" value="Formation of the dystrophin-glycoprotein complex (DGC)"/>
</dbReference>
<dbReference type="PRO" id="PR:Q9Y048"/>
<dbReference type="Proteomes" id="UP000001940">
    <property type="component" value="Chromosome I"/>
</dbReference>
<dbReference type="Bgee" id="WBGene00001115">
    <property type="expression patterns" value="Expressed in pharyngeal muscle cell (C elegans) and 3 other cell types or tissues"/>
</dbReference>
<dbReference type="ExpressionAtlas" id="Q9Y048">
    <property type="expression patterns" value="baseline and differential"/>
</dbReference>
<dbReference type="GO" id="GO:0005737">
    <property type="term" value="C:cytoplasm"/>
    <property type="evidence" value="ECO:0007669"/>
    <property type="project" value="UniProtKB-SubCell"/>
</dbReference>
<dbReference type="GO" id="GO:0016014">
    <property type="term" value="C:dystrobrevin complex"/>
    <property type="evidence" value="ECO:0000353"/>
    <property type="project" value="WormBase"/>
</dbReference>
<dbReference type="GO" id="GO:0016010">
    <property type="term" value="C:dystrophin-associated glycoprotein complex"/>
    <property type="evidence" value="ECO:0000314"/>
    <property type="project" value="UniProtKB"/>
</dbReference>
<dbReference type="GO" id="GO:0005886">
    <property type="term" value="C:plasma membrane"/>
    <property type="evidence" value="ECO:0000314"/>
    <property type="project" value="WormBase"/>
</dbReference>
<dbReference type="GO" id="GO:0045202">
    <property type="term" value="C:synapse"/>
    <property type="evidence" value="ECO:0000318"/>
    <property type="project" value="GO_Central"/>
</dbReference>
<dbReference type="GO" id="GO:0005277">
    <property type="term" value="F:acetylcholine transmembrane transporter activity"/>
    <property type="evidence" value="ECO:0000315"/>
    <property type="project" value="UniProtKB"/>
</dbReference>
<dbReference type="GO" id="GO:0008092">
    <property type="term" value="F:cytoskeletal protein binding"/>
    <property type="evidence" value="ECO:0000353"/>
    <property type="project" value="WormBase"/>
</dbReference>
<dbReference type="GO" id="GO:0008270">
    <property type="term" value="F:zinc ion binding"/>
    <property type="evidence" value="ECO:0007669"/>
    <property type="project" value="UniProtKB-KW"/>
</dbReference>
<dbReference type="GO" id="GO:0015870">
    <property type="term" value="P:acetylcholine transport"/>
    <property type="evidence" value="ECO:0000315"/>
    <property type="project" value="UniProtKB"/>
</dbReference>
<dbReference type="GO" id="GO:0007529">
    <property type="term" value="P:establishment of synaptic specificity at neuromuscular junction"/>
    <property type="evidence" value="ECO:0000304"/>
    <property type="project" value="UniProtKB"/>
</dbReference>
<dbReference type="GO" id="GO:0007626">
    <property type="term" value="P:locomotory behavior"/>
    <property type="evidence" value="ECO:0000315"/>
    <property type="project" value="WormBase"/>
</dbReference>
<dbReference type="GO" id="GO:0046716">
    <property type="term" value="P:muscle cell cellular homeostasis"/>
    <property type="evidence" value="ECO:0000315"/>
    <property type="project" value="UniProtKB"/>
</dbReference>
<dbReference type="GO" id="GO:0040017">
    <property type="term" value="P:positive regulation of locomotion"/>
    <property type="evidence" value="ECO:0000315"/>
    <property type="project" value="UniProtKB"/>
</dbReference>
<dbReference type="GO" id="GO:0032224">
    <property type="term" value="P:positive regulation of synaptic transmission, cholinergic"/>
    <property type="evidence" value="ECO:0000315"/>
    <property type="project" value="WormBase"/>
</dbReference>
<dbReference type="GO" id="GO:0045214">
    <property type="term" value="P:sarcomere organization"/>
    <property type="evidence" value="ECO:0000316"/>
    <property type="project" value="WormBase"/>
</dbReference>
<dbReference type="GO" id="GO:0099536">
    <property type="term" value="P:synaptic signaling"/>
    <property type="evidence" value="ECO:0000318"/>
    <property type="project" value="GO_Central"/>
</dbReference>
<dbReference type="GO" id="GO:0007271">
    <property type="term" value="P:synaptic transmission, cholinergic"/>
    <property type="evidence" value="ECO:0000315"/>
    <property type="project" value="UniProtKB"/>
</dbReference>
<dbReference type="CDD" id="cd16244">
    <property type="entry name" value="EFh_DTN"/>
    <property type="match status" value="1"/>
</dbReference>
<dbReference type="CDD" id="cd02334">
    <property type="entry name" value="ZZ_dystrophin"/>
    <property type="match status" value="1"/>
</dbReference>
<dbReference type="Gene3D" id="3.30.60.90">
    <property type="match status" value="1"/>
</dbReference>
<dbReference type="Gene3D" id="1.10.238.10">
    <property type="entry name" value="EF-hand"/>
    <property type="match status" value="2"/>
</dbReference>
<dbReference type="InterPro" id="IPR017432">
    <property type="entry name" value="Distrobrevin"/>
</dbReference>
<dbReference type="InterPro" id="IPR011992">
    <property type="entry name" value="EF-hand-dom_pair"/>
</dbReference>
<dbReference type="InterPro" id="IPR015153">
    <property type="entry name" value="EF-hand_dom_typ1"/>
</dbReference>
<dbReference type="InterPro" id="IPR015154">
    <property type="entry name" value="EF-hand_dom_typ2"/>
</dbReference>
<dbReference type="InterPro" id="IPR050774">
    <property type="entry name" value="KCMF1/Dystrophin"/>
</dbReference>
<dbReference type="InterPro" id="IPR000433">
    <property type="entry name" value="Znf_ZZ"/>
</dbReference>
<dbReference type="InterPro" id="IPR043145">
    <property type="entry name" value="Znf_ZZ_sf"/>
</dbReference>
<dbReference type="PANTHER" id="PTHR12268:SF27">
    <property type="entry name" value="DYSTROBREVIN, ISOFORM F"/>
    <property type="match status" value="1"/>
</dbReference>
<dbReference type="PANTHER" id="PTHR12268">
    <property type="entry name" value="E3 UBIQUITIN-PROTEIN LIGASE KCMF1"/>
    <property type="match status" value="1"/>
</dbReference>
<dbReference type="Pfam" id="PF09068">
    <property type="entry name" value="EF-hand_2"/>
    <property type="match status" value="1"/>
</dbReference>
<dbReference type="Pfam" id="PF09069">
    <property type="entry name" value="EF-hand_3"/>
    <property type="match status" value="1"/>
</dbReference>
<dbReference type="Pfam" id="PF00569">
    <property type="entry name" value="ZZ"/>
    <property type="match status" value="1"/>
</dbReference>
<dbReference type="PIRSF" id="PIRSF038204">
    <property type="entry name" value="Distrobrevin"/>
    <property type="match status" value="1"/>
</dbReference>
<dbReference type="SMART" id="SM00291">
    <property type="entry name" value="ZnF_ZZ"/>
    <property type="match status" value="1"/>
</dbReference>
<dbReference type="SUPFAM" id="SSF47473">
    <property type="entry name" value="EF-hand"/>
    <property type="match status" value="2"/>
</dbReference>
<dbReference type="SUPFAM" id="SSF57850">
    <property type="entry name" value="RING/U-box"/>
    <property type="match status" value="1"/>
</dbReference>
<dbReference type="PROSITE" id="PS01357">
    <property type="entry name" value="ZF_ZZ_1"/>
    <property type="match status" value="1"/>
</dbReference>
<dbReference type="PROSITE" id="PS50135">
    <property type="entry name" value="ZF_ZZ_2"/>
    <property type="match status" value="1"/>
</dbReference>
<sequence length="590" mass="65427">MLWSNGGGGPREPSSAPSPDHHRAMHSVPPIVASEMQQLIDEMRLQDFDSIRFATYRAACKLRFIQQKTKVHLVDIWNMIEAFRENGLNALPLHTVIKTSRAELLLTTVFHNLNKRLVASQHVDTDVSISLLLAFLLGAYDKQNTGRLTVFSIKVALATLCAGKLVDKLRYIFSQIADSNGLMDHIKFTDFLQQILSLTTAVFEAPTFGFSENAVNQCFHKDEKVSLNVFLDTFLSDPCPPCIMWLPLLHRMASVSNVYHPVVCDACQVRSFTGFRYKCQRCANYQLCQSCFWRGRTSQNHSNEHEMKEYSSYKSPTKQLVHSIHKSLQCIPATSTVGDANIDIFNAKIGGPVSSKPARPLNLNNIVPATPTTIRRQHAATSSADWPTSPVLLPGQASHGGVIDDEHKLIARYAAKLSGRADYPLSNGRSMNSSMVGDERTLIAQLEEENSMMVREMARLESQTTSDDGLAGLRDRKMELEEKMFEMQQRRRELMMQLEHLMAQLNTGPQPSGGVSSASLSQLPFTASDQQLTGVNSTVANAFRAGSLPATSLQGDLLHAADQITTNMSDLVRQLDLAQSDENGVTINGF</sequence>
<keyword id="KW-0025">Alternative splicing</keyword>
<keyword id="KW-0175">Coiled coil</keyword>
<keyword id="KW-0963">Cytoplasm</keyword>
<keyword id="KW-0479">Metal-binding</keyword>
<keyword id="KW-1185">Reference proteome</keyword>
<keyword id="KW-0862">Zinc</keyword>
<keyword id="KW-0863">Zinc-finger</keyword>
<gene>
    <name evidence="14" type="primary">dyb-1</name>
    <name type="ORF">F47G6.1</name>
</gene>
<reference evidence="12 14" key="1">
    <citation type="journal article" date="1999" name="Neurogenetics">
        <title>Dystrobrevin- and dystrophin-like mutants display similar phenotypes in the nematode Caenorhabditis elegans.</title>
        <authorList>
            <person name="Gieseler K."/>
            <person name="Bessou C."/>
            <person name="Segalat L."/>
        </authorList>
    </citation>
    <scope>NUCLEOTIDE SEQUENCE [MRNA] (ISOFORM A)</scope>
    <scope>FUNCTION</scope>
    <scope>DISRUPTION PHENOTYPE</scope>
    <source>
        <strain evidence="5">Bristol N2</strain>
    </source>
</reference>
<reference evidence="13" key="2">
    <citation type="journal article" date="1998" name="Science">
        <title>Genome sequence of the nematode C. elegans: a platform for investigating biology.</title>
        <authorList>
            <consortium name="The C. elegans sequencing consortium"/>
        </authorList>
    </citation>
    <scope>NUCLEOTIDE SEQUENCE [LARGE SCALE GENOMIC DNA]</scope>
    <source>
        <strain evidence="13">Bristol N2</strain>
    </source>
</reference>
<reference evidence="12" key="3">
    <citation type="journal article" date="1999" name="FEBS Lett.">
        <title>In vitro interactions of Caenorhabditis elegans dystrophin with dystrobrevin and syntrophin.</title>
        <authorList>
            <person name="Gieseler K."/>
            <person name="Abdel-Dayem M."/>
            <person name="Segalat L."/>
        </authorList>
    </citation>
    <scope>INTERACTION WITH STN-1 AND DYS-1</scope>
</reference>
<reference evidence="12" key="4">
    <citation type="journal article" date="2001" name="J. Mol. Biol.">
        <title>Molecular, genetic and physiological characterisation of dystrobrevin-like (dyb-1) mutants of Caenorhabditis elegans.</title>
        <authorList>
            <person name="Gieseler K."/>
            <person name="Mariol M.-C."/>
            <person name="Bessou C."/>
            <person name="Migaud M."/>
            <person name="Franks C.J."/>
            <person name="Holden-Dye L."/>
            <person name="Segalat L."/>
        </authorList>
    </citation>
    <scope>FUNCTION</scope>
    <scope>TISSUE SPECIFICITY</scope>
</reference>
<reference evidence="12" key="5">
    <citation type="journal article" date="2002" name="Eur. J. Biochem.">
        <title>Dystrobrevin requires a dystrophin-binding domain to function in Caenorhabditis elegans.</title>
        <authorList>
            <person name="Grisoni K."/>
            <person name="Gieseler K."/>
            <person name="Segalat L."/>
        </authorList>
    </citation>
    <scope>FUNCTION</scope>
    <scope>INTERACTION WITH DYS-1</scope>
</reference>
<reference evidence="12" key="6">
    <citation type="journal article" date="2002" name="Neuromuscul. Disord.">
        <title>Overexpression of dystrobrevin delays locomotion defects and muscle degeneration in a dystrophin-deficient Caenorhabditis elegans.</title>
        <authorList>
            <person name="Gieseler K."/>
            <person name="Grisoni K."/>
            <person name="Mariol M.-C."/>
            <person name="Segalat L."/>
        </authorList>
    </citation>
    <scope>FUNCTION</scope>
</reference>
<reference evidence="12" key="7">
    <citation type="journal article" date="2003" name="J. Mol. Biol.">
        <title>The stn-1 syntrophin gene of C.elegans is functionally related to dystrophin and dystrobrevin.</title>
        <authorList>
            <person name="Grisoni K."/>
            <person name="Gieseler K."/>
            <person name="Mariol M.-C."/>
            <person name="Martin E."/>
            <person name="Carre-Pierrat M."/>
            <person name="Moulder G."/>
            <person name="Barstead R."/>
            <person name="Segalat L."/>
        </authorList>
    </citation>
    <scope>FUNCTION</scope>
    <scope>INTERACTION WITH STN-1</scope>
</reference>
<reference evidence="12" key="8">
    <citation type="journal article" date="2012" name="J. Biol. Chem.">
        <title>Interaction of alpha-catulin with dystrobrevin contributes to integrity of dystrophin complex in muscle.</title>
        <authorList>
            <person name="Oh H.J."/>
            <person name="Abraham L.S."/>
            <person name="van Hengel J."/>
            <person name="Stove C."/>
            <person name="Proszynski T.J."/>
            <person name="Gevaert K."/>
            <person name="DiMario J.X."/>
            <person name="Sanes J.R."/>
            <person name="van Roy F."/>
            <person name="Kim H."/>
        </authorList>
    </citation>
    <scope>FUNCTION</scope>
    <scope>INTERACTION WITH CTN-1</scope>
    <scope>TISSUE SPECIFICITY</scope>
    <scope>DOMAIN</scope>
    <scope>MUTAGENESIS OF 38-GLN--PHE-590</scope>
</reference>
<feature type="chain" id="PRO_0000080035" description="Dystrobrevin-1">
    <location>
        <begin position="1"/>
        <end position="590"/>
    </location>
</feature>
<feature type="zinc finger region" description="ZZ-type" evidence="3">
    <location>
        <begin position="259"/>
        <end position="315"/>
    </location>
</feature>
<feature type="region of interest" description="Disordered" evidence="4">
    <location>
        <begin position="1"/>
        <end position="25"/>
    </location>
</feature>
<feature type="region of interest" description="Essential for interaction with ctn-1">
    <location>
        <begin position="468"/>
        <end position="590"/>
    </location>
</feature>
<feature type="region of interest" description="Essential for interaction with dys-1">
    <location>
        <begin position="484"/>
        <end position="490"/>
    </location>
</feature>
<feature type="coiled-coil region" evidence="2">
    <location>
        <begin position="434"/>
        <end position="508"/>
    </location>
</feature>
<feature type="compositionally biased region" description="Gly residues" evidence="4">
    <location>
        <begin position="1"/>
        <end position="10"/>
    </location>
</feature>
<feature type="binding site" evidence="3">
    <location>
        <position position="264"/>
    </location>
    <ligand>
        <name>Zn(2+)</name>
        <dbReference type="ChEBI" id="CHEBI:29105"/>
        <label>1</label>
    </ligand>
</feature>
<feature type="binding site" evidence="3">
    <location>
        <position position="267"/>
    </location>
    <ligand>
        <name>Zn(2+)</name>
        <dbReference type="ChEBI" id="CHEBI:29105"/>
        <label>1</label>
    </ligand>
</feature>
<feature type="binding site" evidence="3">
    <location>
        <position position="279"/>
    </location>
    <ligand>
        <name>Zn(2+)</name>
        <dbReference type="ChEBI" id="CHEBI:29105"/>
        <label>2</label>
    </ligand>
</feature>
<feature type="binding site" evidence="3">
    <location>
        <position position="282"/>
    </location>
    <ligand>
        <name>Zn(2+)</name>
        <dbReference type="ChEBI" id="CHEBI:29105"/>
        <label>2</label>
    </ligand>
</feature>
<feature type="binding site" evidence="3">
    <location>
        <position position="288"/>
    </location>
    <ligand>
        <name>Zn(2+)</name>
        <dbReference type="ChEBI" id="CHEBI:29105"/>
        <label>1</label>
    </ligand>
</feature>
<feature type="binding site" evidence="3">
    <location>
        <position position="291"/>
    </location>
    <ligand>
        <name>Zn(2+)</name>
        <dbReference type="ChEBI" id="CHEBI:29105"/>
        <label>1</label>
    </ligand>
</feature>
<feature type="binding site" evidence="3">
    <location>
        <position position="301"/>
    </location>
    <ligand>
        <name>Zn(2+)</name>
        <dbReference type="ChEBI" id="CHEBI:29105"/>
        <label>2</label>
    </ligand>
</feature>
<feature type="binding site" evidence="3">
    <location>
        <position position="305"/>
    </location>
    <ligand>
        <name>Zn(2+)</name>
        <dbReference type="ChEBI" id="CHEBI:29105"/>
        <label>2</label>
    </ligand>
</feature>
<feature type="splice variant" id="VSP_062387" description="In isoform b." evidence="12">
    <location>
        <begin position="1"/>
        <end position="78"/>
    </location>
</feature>
<feature type="mutagenesis site" description="In cx36; abolishes ctn-1 punctate pattern at the muscle membrane." evidence="11">
    <location>
        <begin position="38"/>
        <end position="590"/>
    </location>
</feature>
<proteinExistence type="evidence at protein level"/>
<evidence type="ECO:0000250" key="1"/>
<evidence type="ECO:0000255" key="2"/>
<evidence type="ECO:0000255" key="3">
    <source>
        <dbReference type="PROSITE-ProRule" id="PRU00228"/>
    </source>
</evidence>
<evidence type="ECO:0000256" key="4">
    <source>
        <dbReference type="SAM" id="MobiDB-lite"/>
    </source>
</evidence>
<evidence type="ECO:0000269" key="5">
    <source>
    </source>
</evidence>
<evidence type="ECO:0000269" key="6">
    <source>
    </source>
</evidence>
<evidence type="ECO:0000269" key="7">
    <source>
    </source>
</evidence>
<evidence type="ECO:0000269" key="8">
    <source>
    </source>
</evidence>
<evidence type="ECO:0000269" key="9">
    <source>
    </source>
</evidence>
<evidence type="ECO:0000269" key="10">
    <source>
    </source>
</evidence>
<evidence type="ECO:0000269" key="11">
    <source>
    </source>
</evidence>
<evidence type="ECO:0000305" key="12"/>
<evidence type="ECO:0000312" key="13">
    <source>
        <dbReference type="Proteomes" id="UP000001940"/>
    </source>
</evidence>
<evidence type="ECO:0000312" key="14">
    <source>
        <dbReference type="WormBase" id="F47G6.1a"/>
    </source>
</evidence>
<evidence type="ECO:0000312" key="15">
    <source>
        <dbReference type="WormBase" id="F47G6.1b"/>
    </source>
</evidence>
<organism>
    <name type="scientific">Caenorhabditis elegans</name>
    <dbReference type="NCBI Taxonomy" id="6239"/>
    <lineage>
        <taxon>Eukaryota</taxon>
        <taxon>Metazoa</taxon>
        <taxon>Ecdysozoa</taxon>
        <taxon>Nematoda</taxon>
        <taxon>Chromadorea</taxon>
        <taxon>Rhabditida</taxon>
        <taxon>Rhabditina</taxon>
        <taxon>Rhabditomorpha</taxon>
        <taxon>Rhabditoidea</taxon>
        <taxon>Rhabditidae</taxon>
        <taxon>Peloderinae</taxon>
        <taxon>Caenorhabditis</taxon>
    </lineage>
</organism>
<protein>
    <recommendedName>
        <fullName>Dystrobrevin-1</fullName>
    </recommendedName>
</protein>
<comment type="function">
    <text evidence="5 7 8 9 10 11">Plays a role in cholinergic transmission and as a functional partner of dystrophin (dys-1), necessary for muscle maintenance. Required for localization of ctn-1 near dense bodies in muscle cells (PubMed:22577143).</text>
</comment>
<comment type="subunit">
    <text evidence="6 8 10 11">Component of the dystrophin glycoprotein complex (DGC). Interacts with dystrophin (dys-1) and syntrophin (stn-1) to form the DGC. Interacts (via C-terminus) with ctn-1 (via N-terminus); the interaction is required for localization of the dystrophin complex and ctn-1 near dense bodies in muscle cells (PubMed:22577143).</text>
</comment>
<comment type="interaction">
    <interactant intactId="EBI-322698">
        <id>Q9Y048</id>
    </interactant>
    <interactant intactId="EBI-446952">
        <id>Q9TW65</id>
        <label>dys-1</label>
    </interactant>
    <organismsDiffer>false</organismsDiffer>
    <experiments>4</experiments>
</comment>
<comment type="subcellular location">
    <subcellularLocation>
        <location evidence="1">Cytoplasm</location>
    </subcellularLocation>
</comment>
<comment type="alternative products">
    <event type="alternative splicing"/>
    <isoform>
        <id>Q9Y048-1</id>
        <name evidence="14">a</name>
        <sequence type="displayed"/>
    </isoform>
    <isoform>
        <id>Q9Y048-2</id>
        <name evidence="15">b</name>
        <sequence type="described" ref="VSP_062387"/>
    </isoform>
</comment>
<comment type="tissue specificity">
    <text evidence="7 11">From late embryogenesis to adulthood, expressed in neurons and muscles; particularly strong in the ventral nerve cord and in muscles of the body wall, head pharyngeal, and vulva; weaker in the intestinal muscle (at protein level).</text>
</comment>
<comment type="domain">
    <text evidence="8 11">The coiled-coil domain mediates the specific interaction with dys-1 and ctn-1.</text>
</comment>
<comment type="disruption phenotype">
    <text evidence="5">Mutants synergistically exhibit progressive myopathy. In dyb-1 and hlh-1 double mutants, there is an uncoordinated phenotype associated with some muscle degeneration. Overexpression of dyb-1 in dys-1 and hlh-1 double mutants delays, but does not prevent the onset and progression of myopathy.</text>
</comment>
<comment type="similarity">
    <text evidence="5">Belongs to the dystrophin family. Dystrobrevin subfamily.</text>
</comment>